<dbReference type="EMBL" id="M87483">
    <property type="protein sequence ID" value="AAA25222.1"/>
    <property type="molecule type" value="Genomic_DNA"/>
</dbReference>
<dbReference type="EMBL" id="AE005176">
    <property type="protein sequence ID" value="AAK05569.1"/>
    <property type="molecule type" value="Genomic_DNA"/>
</dbReference>
<dbReference type="PIR" id="S35123">
    <property type="entry name" value="S35123"/>
</dbReference>
<dbReference type="RefSeq" id="NP_267627.1">
    <property type="nucleotide sequence ID" value="NC_002662.1"/>
</dbReference>
<dbReference type="RefSeq" id="WP_003130423.1">
    <property type="nucleotide sequence ID" value="NC_002662.1"/>
</dbReference>
<dbReference type="PaxDb" id="272623-L101688"/>
<dbReference type="EnsemblBacteria" id="AAK05569">
    <property type="protein sequence ID" value="AAK05569"/>
    <property type="gene ID" value="L101688"/>
</dbReference>
<dbReference type="KEGG" id="lla:L101688"/>
<dbReference type="PATRIC" id="fig|272623.7.peg.1581"/>
<dbReference type="eggNOG" id="COG3759">
    <property type="taxonomic scope" value="Bacteria"/>
</dbReference>
<dbReference type="HOGENOM" id="CLU_129819_2_1_9"/>
<dbReference type="OrthoDB" id="9803832at2"/>
<dbReference type="Proteomes" id="UP000002196">
    <property type="component" value="Chromosome"/>
</dbReference>
<dbReference type="InterPro" id="IPR009732">
    <property type="entry name" value="DUF1304"/>
</dbReference>
<dbReference type="PANTHER" id="PTHR38446">
    <property type="entry name" value="BLL0914 PROTEIN"/>
    <property type="match status" value="1"/>
</dbReference>
<dbReference type="PANTHER" id="PTHR38446:SF1">
    <property type="entry name" value="BLL0914 PROTEIN"/>
    <property type="match status" value="1"/>
</dbReference>
<dbReference type="Pfam" id="PF06993">
    <property type="entry name" value="DUF1304"/>
    <property type="match status" value="1"/>
</dbReference>
<sequence length="119" mass="13273">MTILTIILSLLVALEFFYIMYLETFATSSKTTSRVFNMGKEELERSSVQTLFKNQGIYNGLIGLGLIYAIFFSSAQLEIVRLLLIYIILVALYGSLTSNKKIILTQGGLAILALISSFF</sequence>
<accession>Q02009</accession>
<organism>
    <name type="scientific">Lactococcus lactis subsp. lactis (strain IL1403)</name>
    <name type="common">Streptococcus lactis</name>
    <dbReference type="NCBI Taxonomy" id="272623"/>
    <lineage>
        <taxon>Bacteria</taxon>
        <taxon>Bacillati</taxon>
        <taxon>Bacillota</taxon>
        <taxon>Bacilli</taxon>
        <taxon>Lactobacillales</taxon>
        <taxon>Streptococcaceae</taxon>
        <taxon>Lactococcus</taxon>
    </lineage>
</organism>
<name>YPAA_LACLA</name>
<protein>
    <recommendedName>
        <fullName>Uncharacterized protein YpaA</fullName>
    </recommendedName>
</protein>
<proteinExistence type="predicted"/>
<keyword id="KW-1185">Reference proteome</keyword>
<reference key="1">
    <citation type="journal article" date="1992" name="J. Bacteriol.">
        <title>Tryptophan biosynthesis genes in Lactococcus lactis subsp. lactis.</title>
        <authorList>
            <person name="Bardowski J."/>
            <person name="Ehrlich S.D."/>
            <person name="Chopin A."/>
        </authorList>
    </citation>
    <scope>NUCLEOTIDE SEQUENCE [GENOMIC DNA]</scope>
    <source>
        <strain>IL1403</strain>
    </source>
</reference>
<reference key="2">
    <citation type="journal article" date="2001" name="Genome Res.">
        <title>The complete genome sequence of the lactic acid bacterium Lactococcus lactis ssp. lactis IL1403.</title>
        <authorList>
            <person name="Bolotin A."/>
            <person name="Wincker P."/>
            <person name="Mauger S."/>
            <person name="Jaillon O."/>
            <person name="Malarme K."/>
            <person name="Weissenbach J."/>
            <person name="Ehrlich S.D."/>
            <person name="Sorokin A."/>
        </authorList>
    </citation>
    <scope>NUCLEOTIDE SEQUENCE [LARGE SCALE GENOMIC DNA]</scope>
    <source>
        <strain>IL1403</strain>
    </source>
</reference>
<feature type="chain" id="PRO_0000218492" description="Uncharacterized protein YpaA">
    <location>
        <begin position="1"/>
        <end position="119"/>
    </location>
</feature>
<gene>
    <name type="primary">ypaA</name>
    <name type="ordered locus">LL1471</name>
    <name type="ORF">L101688</name>
</gene>